<name>MSPD2_HUMAN</name>
<proteinExistence type="evidence at protein level"/>
<feature type="chain" id="PRO_0000213463" description="Motile sperm domain-containing protein 2">
    <location>
        <begin position="1"/>
        <end position="518"/>
    </location>
</feature>
<feature type="topological domain" description="Cytoplasmic" evidence="8">
    <location>
        <begin position="1"/>
        <end position="496"/>
    </location>
</feature>
<feature type="transmembrane region" description="Helical; Anchor for type IV membrane protein" evidence="4 6">
    <location>
        <begin position="497"/>
        <end position="518"/>
    </location>
</feature>
<feature type="domain" description="CRAL-TRIO" evidence="1">
    <location>
        <begin position="82"/>
        <end position="239"/>
    </location>
</feature>
<feature type="domain" description="MSP" evidence="4">
    <location>
        <begin position="327"/>
        <end position="445"/>
    </location>
</feature>
<feature type="region of interest" description="Disordered" evidence="2">
    <location>
        <begin position="252"/>
        <end position="308"/>
    </location>
</feature>
<feature type="region of interest" description="Required for FFAT motif binding and phosphorylated FFAT motif binding" evidence="5 10 12">
    <location>
        <begin position="365"/>
        <end position="366"/>
    </location>
</feature>
<feature type="compositionally biased region" description="Basic and acidic residues" evidence="2">
    <location>
        <begin position="265"/>
        <end position="279"/>
    </location>
</feature>
<feature type="site" description="Required for phosphorylated FFAT motif binding" evidence="5 12">
    <location>
        <position position="363"/>
    </location>
</feature>
<feature type="site" description="Required for FFAT motif binding" evidence="5 10">
    <location>
        <position position="374"/>
    </location>
</feature>
<feature type="splice variant" id="VSP_014046" description="In isoform 2." evidence="7">
    <location>
        <begin position="1"/>
        <end position="63"/>
    </location>
</feature>
<feature type="sequence variant" id="VAR_034109" description="In dbSNP:rs35164803.">
    <original>S</original>
    <variation>N</variation>
    <location>
        <position position="240"/>
    </location>
</feature>
<feature type="mutagenesis site" description="Does not affect endoplasmic reticulum distribution. Does not impair the folding of the CRAL-TRIO domain. Decreases lipid droplets (LDs) binding." evidence="6">
    <original>W</original>
    <variation>E</variation>
    <location>
        <position position="201"/>
    </location>
</feature>
<feature type="mutagenesis site" description="Partially affects the binding of the FFAT motif of OSBPL1A. Partially affects the binding of the phosphorylated FFAT motif of STARD3." evidence="5">
    <original>K</original>
    <variation>L</variation>
    <location>
        <position position="363"/>
    </location>
</feature>
<feature type="mutagenesis site" description="Prevents binding to the FFAT motif of target proteins STARD3, STARD3NL, RMDN3, OSBPL1A and CERT1 and impairs recruitment to interorganelle membrane contacts; when associated with D-406. Significantly increases the recruitment at the periphery of lipid droplets, both in the presence and in the absence of oleic acid (OA); when associated with D-406. Does not affect endoplasmic reticulum membrane location; when associated with D-406." evidence="4 6">
    <original>R</original>
    <variation>D</variation>
    <location>
        <position position="404"/>
    </location>
</feature>
<feature type="mutagenesis site" description="Prevents binding to the FFAT motif of target proteins STARD3, STARD3NL, RMDN3, OSBPL1A and CERT1 and impairs recruitment to interorganelle membrane contacts; when associated with D-404. Significantly increases the recruitment at the periphery of lipid droplets, both in the presence and in the absence of oleic acid (OA); when associated with D-404. Does not affect endoplasmic reticulum membrane location; when associated with D-404." evidence="4 6">
    <original>L</original>
    <variation>D</variation>
    <location>
        <position position="406"/>
    </location>
</feature>
<feature type="mutagenesis site" description="Loss of localization to endoplasmic reticulum membrane." evidence="4">
    <location>
        <begin position="493"/>
        <end position="518"/>
    </location>
</feature>
<feature type="strand" evidence="13">
    <location>
        <begin position="326"/>
        <end position="336"/>
    </location>
</feature>
<feature type="strand" evidence="13">
    <location>
        <begin position="346"/>
        <end position="354"/>
    </location>
</feature>
<feature type="strand" evidence="13">
    <location>
        <begin position="356"/>
        <end position="358"/>
    </location>
</feature>
<feature type="strand" evidence="13">
    <location>
        <begin position="360"/>
        <end position="367"/>
    </location>
</feature>
<feature type="turn" evidence="13">
    <location>
        <begin position="369"/>
        <end position="371"/>
    </location>
</feature>
<feature type="strand" evidence="13">
    <location>
        <begin position="372"/>
        <end position="376"/>
    </location>
</feature>
<feature type="strand" evidence="13">
    <location>
        <begin position="378"/>
        <end position="381"/>
    </location>
</feature>
<feature type="strand" evidence="13">
    <location>
        <begin position="386"/>
        <end position="393"/>
    </location>
</feature>
<feature type="strand" evidence="13">
    <location>
        <begin position="404"/>
        <end position="411"/>
    </location>
</feature>
<feature type="helix" evidence="13">
    <location>
        <begin position="420"/>
        <end position="429"/>
    </location>
</feature>
<feature type="helix" evidence="13">
    <location>
        <begin position="432"/>
        <end position="434"/>
    </location>
</feature>
<feature type="strand" evidence="13">
    <location>
        <begin position="436"/>
        <end position="442"/>
    </location>
</feature>
<sequence length="518" mass="59746">MAENHAQNKAKLISETRRRFEAEYVTDKSDKYDARDVERLQQDDNWVESYLSWRHNIVDETLKMLDESFQWRKEISVNDLNESSIPRWLLEIGVIYLHGYDKEGNKLFWIRVKYHVKDQKTILDKKKLIAFWLERYAKRENGKPVTVMFDLSETGINSIDMDFVRFIINCFKVYYPKYLSKIVIFDMPWLMNAAFKIVKTWLGPEAVSLLKFTSKNEVQDYVSVEYLPPHMGGTDPFKYSYPPLVDDDFQTPLCENGPITSEDETSSKEDIESDGKETLETISNEEQTPLLKKINPTESTSKAEENEKVDSKVKAFKKPLSVFKGPLLHISPAEELYFGSTESGEKKTLIVLTNVTKNIVAFKVRTTAPEKYRVKPSNSSCDPGASVDIVVSPHGGLTVSAQDRFLIMAAEMEQSSGTGPAELTQFWKEVPRNKVMEHRLRCHTVESSKPNTLTLKDNAFNMSDKTSEDICLQLSRLLESNRKLEDQVQRCIWFQQLLLSLTMLLLAFVTSFFYLLYS</sequence>
<gene>
    <name evidence="9" type="primary">MOSPD2</name>
</gene>
<comment type="function">
    <text evidence="3 4 5 6">Endoplasmic reticulum-anchored protein that mediates the formation of contact sites between the endoplasmic (ER) and endosomes, mitochondria or Golgi through interaction with conventional- and phosphorylated-FFAT-containing organelle-bound proteins (PubMed:29858488, PubMed:33124732, PubMed:35389430). In addition, forms endoplasmic reticulum (ER)-lipid droplets (LDs) contacts through a direct protein-membrane interaction and participates in LDs homeostasis (PubMed:35389430). The attachment mechanism involves an amphipathic helix that has an affinity for lipid packing defects present at the surface of LDs (PubMed:35389430). Promotes migration of primary monocytes and neutrophils, in response to various chemokines (PubMed:28137892).</text>
</comment>
<comment type="subunit">
    <text evidence="4 5">Homooligomer (PubMed:33124732). Interacts (via MSP domain) with STARD3NL (via FFAT motif), RMDN3 (via FFAT motif), OSBPL1A (via FFAT motif) and CERT1 (via FFAT motif) (PubMed:29858488, PubMed:33124732). Interacts (via MSP domain) with STARD3 (via phosphorylated FFAT motif); this interaction depends on the critical phosphorylation of STARD3 on 'Ser-209' (PubMed:29858488, PubMed:33124732). Interacts with RB1CC1 (via phosphorylated FFAT motif), MIGA2 (via phosphorylated FFAT motif) and OSBPL1A (via FFAT motif) (PubMed:33124732).</text>
</comment>
<comment type="interaction">
    <interactant intactId="EBI-2812848">
        <id>Q8NHP6</id>
    </interactant>
    <interactant intactId="EBI-2372803">
        <id>Q13410</id>
        <label>BTN1A1</label>
    </interactant>
    <organismsDiffer>false</organismsDiffer>
    <experiments>3</experiments>
</comment>
<comment type="interaction">
    <interactant intactId="EBI-2812848">
        <id>Q8NHP6</id>
    </interactant>
    <interactant intactId="EBI-765918">
        <id>Q9BXW6</id>
        <label>OSBPL1A</label>
    </interactant>
    <organismsDiffer>false</organismsDiffer>
    <experiments>8</experiments>
</comment>
<comment type="interaction">
    <interactant intactId="EBI-2812848">
        <id>Q8NHP6</id>
    </interactant>
    <interactant intactId="EBI-1056589">
        <id>Q96TC7</id>
        <label>RMDN3</label>
    </interactant>
    <organismsDiffer>false</organismsDiffer>
    <experiments>4</experiments>
</comment>
<comment type="interaction">
    <interactant intactId="EBI-2812848">
        <id>Q8NHP6</id>
    </interactant>
    <interactant intactId="EBI-9819324">
        <id>Q14849</id>
        <label>STARD3</label>
    </interactant>
    <organismsDiffer>false</organismsDiffer>
    <experiments>6</experiments>
</comment>
<comment type="interaction">
    <interactant intactId="EBI-2812848">
        <id>Q8NHP6</id>
    </interactant>
    <interactant intactId="EBI-3916943">
        <id>O95772</id>
        <label>STARD3NL</label>
    </interactant>
    <organismsDiffer>false</organismsDiffer>
    <experiments>6</experiments>
</comment>
<comment type="subcellular location">
    <subcellularLocation>
        <location evidence="3 4 6">Endoplasmic reticulum membrane</location>
        <topology evidence="4">Single-pass type IV membrane protein</topology>
    </subcellularLocation>
    <text evidence="4 6">Localization to contact sites involving the endoplasmic reticulum and several organelles is regulated by interaction with proteins containing FFAT motif (PubMed:29858488). Dynamically distributes between specific subdomains of the endoplasmic reticulum (ER): ER membranes in contact with lipid droplets (LDs) and the remainder of the ER (PubMed:35389430).</text>
</comment>
<comment type="alternative products">
    <event type="alternative splicing"/>
    <isoform>
        <id>Q8NHP6-1</id>
        <name>1</name>
        <sequence type="displayed"/>
    </isoform>
    <isoform>
        <id>Q8NHP6-2</id>
        <name>2</name>
        <sequence type="described" ref="VSP_014046"/>
    </isoform>
</comment>
<comment type="tissue specificity">
    <text evidence="3">Highly expressed in CD14(+) monocytes, and at lower levels in neutrophils. Does not show significant expression in B-cells or T-cells.</text>
</comment>
<comment type="domain">
    <text evidence="4">The MSP domain is required for binding to the FFAT motif of target proteins.</text>
</comment>
<comment type="domain">
    <text evidence="6">The CRAL-TRIO domain is necessary for the recruitment to lipid droplets (LDs) and mediates the formation of ER-LDs contacts through an amphipathic helix.</text>
</comment>
<comment type="domain">
    <text evidence="6">The transmembrane domain is necessary for binding to LDs.</text>
</comment>
<evidence type="ECO:0000255" key="1">
    <source>
        <dbReference type="PROSITE-ProRule" id="PRU00056"/>
    </source>
</evidence>
<evidence type="ECO:0000256" key="2">
    <source>
        <dbReference type="SAM" id="MobiDB-lite"/>
    </source>
</evidence>
<evidence type="ECO:0000269" key="3">
    <source>
    </source>
</evidence>
<evidence type="ECO:0000269" key="4">
    <source>
    </source>
</evidence>
<evidence type="ECO:0000269" key="5">
    <source>
    </source>
</evidence>
<evidence type="ECO:0000269" key="6">
    <source>
    </source>
</evidence>
<evidence type="ECO:0000303" key="7">
    <source>
    </source>
</evidence>
<evidence type="ECO:0000305" key="8"/>
<evidence type="ECO:0000312" key="9">
    <source>
        <dbReference type="HGNC" id="HGNC:28381"/>
    </source>
</evidence>
<evidence type="ECO:0007744" key="10">
    <source>
        <dbReference type="PDB" id="6TQS"/>
    </source>
</evidence>
<evidence type="ECO:0007744" key="11">
    <source>
        <dbReference type="PDB" id="6TQT"/>
    </source>
</evidence>
<evidence type="ECO:0007744" key="12">
    <source>
        <dbReference type="PDB" id="6TQU"/>
    </source>
</evidence>
<evidence type="ECO:0007829" key="13">
    <source>
        <dbReference type="PDB" id="6TQT"/>
    </source>
</evidence>
<accession>Q8NHP6</accession>
<accession>Q8N3H2</accession>
<accession>Q8NA83</accession>
<protein>
    <recommendedName>
        <fullName evidence="8">Motile sperm domain-containing protein 2</fullName>
    </recommendedName>
</protein>
<reference key="1">
    <citation type="journal article" date="2004" name="Nat. Genet.">
        <title>Complete sequencing and characterization of 21,243 full-length human cDNAs.</title>
        <authorList>
            <person name="Ota T."/>
            <person name="Suzuki Y."/>
            <person name="Nishikawa T."/>
            <person name="Otsuki T."/>
            <person name="Sugiyama T."/>
            <person name="Irie R."/>
            <person name="Wakamatsu A."/>
            <person name="Hayashi K."/>
            <person name="Sato H."/>
            <person name="Nagai K."/>
            <person name="Kimura K."/>
            <person name="Makita H."/>
            <person name="Sekine M."/>
            <person name="Obayashi M."/>
            <person name="Nishi T."/>
            <person name="Shibahara T."/>
            <person name="Tanaka T."/>
            <person name="Ishii S."/>
            <person name="Yamamoto J."/>
            <person name="Saito K."/>
            <person name="Kawai Y."/>
            <person name="Isono Y."/>
            <person name="Nakamura Y."/>
            <person name="Nagahari K."/>
            <person name="Murakami K."/>
            <person name="Yasuda T."/>
            <person name="Iwayanagi T."/>
            <person name="Wagatsuma M."/>
            <person name="Shiratori A."/>
            <person name="Sudo H."/>
            <person name="Hosoiri T."/>
            <person name="Kaku Y."/>
            <person name="Kodaira H."/>
            <person name="Kondo H."/>
            <person name="Sugawara M."/>
            <person name="Takahashi M."/>
            <person name="Kanda K."/>
            <person name="Yokoi T."/>
            <person name="Furuya T."/>
            <person name="Kikkawa E."/>
            <person name="Omura Y."/>
            <person name="Abe K."/>
            <person name="Kamihara K."/>
            <person name="Katsuta N."/>
            <person name="Sato K."/>
            <person name="Tanikawa M."/>
            <person name="Yamazaki M."/>
            <person name="Ninomiya K."/>
            <person name="Ishibashi T."/>
            <person name="Yamashita H."/>
            <person name="Murakawa K."/>
            <person name="Fujimori K."/>
            <person name="Tanai H."/>
            <person name="Kimata M."/>
            <person name="Watanabe M."/>
            <person name="Hiraoka S."/>
            <person name="Chiba Y."/>
            <person name="Ishida S."/>
            <person name="Ono Y."/>
            <person name="Takiguchi S."/>
            <person name="Watanabe S."/>
            <person name="Yosida M."/>
            <person name="Hotuta T."/>
            <person name="Kusano J."/>
            <person name="Kanehori K."/>
            <person name="Takahashi-Fujii A."/>
            <person name="Hara H."/>
            <person name="Tanase T.-O."/>
            <person name="Nomura Y."/>
            <person name="Togiya S."/>
            <person name="Komai F."/>
            <person name="Hara R."/>
            <person name="Takeuchi K."/>
            <person name="Arita M."/>
            <person name="Imose N."/>
            <person name="Musashino K."/>
            <person name="Yuuki H."/>
            <person name="Oshima A."/>
            <person name="Sasaki N."/>
            <person name="Aotsuka S."/>
            <person name="Yoshikawa Y."/>
            <person name="Matsunawa H."/>
            <person name="Ichihara T."/>
            <person name="Shiohata N."/>
            <person name="Sano S."/>
            <person name="Moriya S."/>
            <person name="Momiyama H."/>
            <person name="Satoh N."/>
            <person name="Takami S."/>
            <person name="Terashima Y."/>
            <person name="Suzuki O."/>
            <person name="Nakagawa S."/>
            <person name="Senoh A."/>
            <person name="Mizoguchi H."/>
            <person name="Goto Y."/>
            <person name="Shimizu F."/>
            <person name="Wakebe H."/>
            <person name="Hishigaki H."/>
            <person name="Watanabe T."/>
            <person name="Sugiyama A."/>
            <person name="Takemoto M."/>
            <person name="Kawakami B."/>
            <person name="Yamazaki M."/>
            <person name="Watanabe K."/>
            <person name="Kumagai A."/>
            <person name="Itakura S."/>
            <person name="Fukuzumi Y."/>
            <person name="Fujimori Y."/>
            <person name="Komiyama M."/>
            <person name="Tashiro H."/>
            <person name="Tanigami A."/>
            <person name="Fujiwara T."/>
            <person name="Ono T."/>
            <person name="Yamada K."/>
            <person name="Fujii Y."/>
            <person name="Ozaki K."/>
            <person name="Hirao M."/>
            <person name="Ohmori Y."/>
            <person name="Kawabata A."/>
            <person name="Hikiji T."/>
            <person name="Kobatake N."/>
            <person name="Inagaki H."/>
            <person name="Ikema Y."/>
            <person name="Okamoto S."/>
            <person name="Okitani R."/>
            <person name="Kawakami T."/>
            <person name="Noguchi S."/>
            <person name="Itoh T."/>
            <person name="Shigeta K."/>
            <person name="Senba T."/>
            <person name="Matsumura K."/>
            <person name="Nakajima Y."/>
            <person name="Mizuno T."/>
            <person name="Morinaga M."/>
            <person name="Sasaki M."/>
            <person name="Togashi T."/>
            <person name="Oyama M."/>
            <person name="Hata H."/>
            <person name="Watanabe M."/>
            <person name="Komatsu T."/>
            <person name="Mizushima-Sugano J."/>
            <person name="Satoh T."/>
            <person name="Shirai Y."/>
            <person name="Takahashi Y."/>
            <person name="Nakagawa K."/>
            <person name="Okumura K."/>
            <person name="Nagase T."/>
            <person name="Nomura N."/>
            <person name="Kikuchi H."/>
            <person name="Masuho Y."/>
            <person name="Yamashita R."/>
            <person name="Nakai K."/>
            <person name="Yada T."/>
            <person name="Nakamura Y."/>
            <person name="Ohara O."/>
            <person name="Isogai T."/>
            <person name="Sugano S."/>
        </authorList>
    </citation>
    <scope>NUCLEOTIDE SEQUENCE [LARGE SCALE MRNA] (ISOFORM 2)</scope>
    <source>
        <tissue>Testis</tissue>
    </source>
</reference>
<reference key="2">
    <citation type="journal article" date="2004" name="Genome Res.">
        <title>The status, quality, and expansion of the NIH full-length cDNA project: the Mammalian Gene Collection (MGC).</title>
        <authorList>
            <consortium name="The MGC Project Team"/>
        </authorList>
    </citation>
    <scope>NUCLEOTIDE SEQUENCE [LARGE SCALE MRNA] (ISOFORM 1)</scope>
    <source>
        <tissue>Testis</tissue>
    </source>
</reference>
<reference key="3">
    <citation type="journal article" date="2007" name="BMC Genomics">
        <title>The full-ORF clone resource of the German cDNA consortium.</title>
        <authorList>
            <person name="Bechtel S."/>
            <person name="Rosenfelder H."/>
            <person name="Duda A."/>
            <person name="Schmidt C.P."/>
            <person name="Ernst U."/>
            <person name="Wellenreuther R."/>
            <person name="Mehrle A."/>
            <person name="Schuster C."/>
            <person name="Bahr A."/>
            <person name="Bloecker H."/>
            <person name="Heubner D."/>
            <person name="Hoerlein A."/>
            <person name="Michel G."/>
            <person name="Wedler H."/>
            <person name="Koehrer K."/>
            <person name="Ottenwaelder B."/>
            <person name="Poustka A."/>
            <person name="Wiemann S."/>
            <person name="Schupp I."/>
        </authorList>
    </citation>
    <scope>NUCLEOTIDE SEQUENCE [LARGE SCALE MRNA] OF 276-518</scope>
    <source>
        <tissue>Amygdala</tissue>
    </source>
</reference>
<reference key="4">
    <citation type="journal article" date="2009" name="Anal. Chem.">
        <title>Lys-N and trypsin cover complementary parts of the phosphoproteome in a refined SCX-based approach.</title>
        <authorList>
            <person name="Gauci S."/>
            <person name="Helbig A.O."/>
            <person name="Slijper M."/>
            <person name="Krijgsveld J."/>
            <person name="Heck A.J."/>
            <person name="Mohammed S."/>
        </authorList>
    </citation>
    <scope>IDENTIFICATION BY MASS SPECTROMETRY [LARGE SCALE ANALYSIS]</scope>
</reference>
<reference key="5">
    <citation type="journal article" date="2011" name="BMC Syst. Biol.">
        <title>Initial characterization of the human central proteome.</title>
        <authorList>
            <person name="Burkard T.R."/>
            <person name="Planyavsky M."/>
            <person name="Kaupe I."/>
            <person name="Breitwieser F.P."/>
            <person name="Buerckstuemmer T."/>
            <person name="Bennett K.L."/>
            <person name="Superti-Furga G."/>
            <person name="Colinge J."/>
        </authorList>
    </citation>
    <scope>IDENTIFICATION BY MASS SPECTROMETRY [LARGE SCALE ANALYSIS]</scope>
</reference>
<reference key="6">
    <citation type="journal article" date="2017" name="J. Immunol.">
        <title>Identification of motile sperm domain-containing protein 2 as regulator of human monocyte migration.</title>
        <authorList>
            <person name="Mendel I."/>
            <person name="Yacov N."/>
            <person name="Salem Y."/>
            <person name="Propheta-Meiran O."/>
            <person name="Ishai E."/>
            <person name="Breitbart E."/>
        </authorList>
    </citation>
    <scope>FUNCTION</scope>
    <scope>SUBCELLULAR LOCATION</scope>
    <scope>TISSUE SPECIFICITY</scope>
    <scope>IDENTIFICATION BY MASS SPECTROMETRY</scope>
</reference>
<reference key="7">
    <citation type="journal article" date="2018" name="EMBO Rep.">
        <title>Identification of MOSPD2, a novel scaffold for endoplasmic reticulum membrane contact sites.</title>
        <authorList>
            <person name="Di Mattia T."/>
            <person name="Wilhelm L.P."/>
            <person name="Ikhlef S."/>
            <person name="Wendling C."/>
            <person name="Spehner D."/>
            <person name="Nomine Y."/>
            <person name="Giordano F."/>
            <person name="Mathelin C."/>
            <person name="Drin G."/>
            <person name="Tomasetto C."/>
            <person name="Alpy F."/>
        </authorList>
    </citation>
    <scope>IDENTIFICATION BY MASS SPECTROMETRY</scope>
    <scope>FUNCTION</scope>
    <scope>INTERACTION WITH STARD3; STARD3NL; RMDN3; OSBPL1A AND CERT1</scope>
    <scope>SUBCELLULAR LOCATION</scope>
    <scope>TOPOLOGY</scope>
    <scope>DOMAIN</scope>
    <scope>MUTAGENESIS OF ARG-404; LEU-406 AND 493-TRP--SER-518</scope>
</reference>
<reference key="8">
    <citation type="journal article" date="2022" name="J. Cell Biol.">
        <title>MOSPD2 is an endoplasmic reticulum-lipid droplet tether functioning in LD homeostasis.</title>
        <authorList>
            <person name="Zouiouich M."/>
            <person name="Di Mattia T."/>
            <person name="Martinet A."/>
            <person name="Eichler J."/>
            <person name="Wendling C."/>
            <person name="Tomishige N."/>
            <person name="Grandgirard E."/>
            <person name="Fuggetta N."/>
            <person name="Fromental-Ramain C."/>
            <person name="Mizzon G."/>
            <person name="Dumesnil C."/>
            <person name="Carpentier M."/>
            <person name="Reina-San-Martin B."/>
            <person name="Mathelin C."/>
            <person name="Schwab Y."/>
            <person name="Thiam A.R."/>
            <person name="Kobayashi T."/>
            <person name="Drin G."/>
            <person name="Tomasetto C."/>
            <person name="Alpy F."/>
        </authorList>
    </citation>
    <scope>FUNCTION</scope>
    <scope>SUBCELLULAR LOCATION</scope>
    <scope>TOPOLOGY</scope>
    <scope>DOMAIN</scope>
    <scope>MUTAGENESIS OF TRP-201; ARG-404 AND LEU-406</scope>
</reference>
<reference evidence="10 11 12" key="9">
    <citation type="journal article" date="2020" name="EMBO J.">
        <title>FFAT motif phosphorylation controls formation and lipid transfer function of inter-organelle contacts.</title>
        <authorList>
            <person name="Di Mattia T."/>
            <person name="Martinet A."/>
            <person name="Ikhlef S."/>
            <person name="McEwen A.G."/>
            <person name="Nomine Y."/>
            <person name="Wendling C."/>
            <person name="Poussin-Courmontagne P."/>
            <person name="Voilquin L."/>
            <person name="Eberling P."/>
            <person name="Ruffenach F."/>
            <person name="Cavarelli J."/>
            <person name="Slee J."/>
            <person name="Levine T.P."/>
            <person name="Drin G."/>
            <person name="Tomasetto C."/>
            <person name="Alpy F."/>
        </authorList>
    </citation>
    <scope>X-RAY CRYSTALLOGRAPHY (1.50 ANGSTROMS) OF 282-490 IN COMPLEX WITH THE PHOSPHORYLATED FFAT MOTIF OF STARD3 AND THE FFAT MOTIF OF OSBPL1A</scope>
    <scope>SUBUNIT</scope>
    <scope>INTERACTION WITH STARD3; RB1CC1; MIGA2 AND OSBPL1A</scope>
    <scope>SITE</scope>
    <scope>REGION</scope>
    <scope>MUTAGENESIS OF LYS-363</scope>
</reference>
<organism>
    <name type="scientific">Homo sapiens</name>
    <name type="common">Human</name>
    <dbReference type="NCBI Taxonomy" id="9606"/>
    <lineage>
        <taxon>Eukaryota</taxon>
        <taxon>Metazoa</taxon>
        <taxon>Chordata</taxon>
        <taxon>Craniata</taxon>
        <taxon>Vertebrata</taxon>
        <taxon>Euteleostomi</taxon>
        <taxon>Mammalia</taxon>
        <taxon>Eutheria</taxon>
        <taxon>Euarchontoglires</taxon>
        <taxon>Primates</taxon>
        <taxon>Haplorrhini</taxon>
        <taxon>Catarrhini</taxon>
        <taxon>Hominidae</taxon>
        <taxon>Homo</taxon>
    </lineage>
</organism>
<dbReference type="EMBL" id="AK093075">
    <property type="protein sequence ID" value="BAC04043.1"/>
    <property type="molecule type" value="mRNA"/>
</dbReference>
<dbReference type="EMBL" id="BC030641">
    <property type="protein sequence ID" value="AAH30641.1"/>
    <property type="molecule type" value="mRNA"/>
</dbReference>
<dbReference type="EMBL" id="AL834345">
    <property type="protein sequence ID" value="CAD39011.1"/>
    <property type="molecule type" value="mRNA"/>
</dbReference>
<dbReference type="CCDS" id="CCDS14162.1">
    <molecule id="Q8NHP6-1"/>
</dbReference>
<dbReference type="RefSeq" id="NP_001170946.1">
    <molecule id="Q8NHP6-2"/>
    <property type="nucleotide sequence ID" value="NM_001177475.2"/>
</dbReference>
<dbReference type="RefSeq" id="NP_689794.1">
    <molecule id="Q8NHP6-1"/>
    <property type="nucleotide sequence ID" value="NM_152581.4"/>
</dbReference>
<dbReference type="PDB" id="6TQS">
    <property type="method" value="X-ray"/>
    <property type="resolution" value="2.25 A"/>
    <property type="chains" value="A/B/C/D/E/F=282-490"/>
</dbReference>
<dbReference type="PDB" id="6TQT">
    <property type="method" value="X-ray"/>
    <property type="resolution" value="1.50 A"/>
    <property type="chains" value="A=282-490"/>
</dbReference>
<dbReference type="PDB" id="6TQU">
    <property type="method" value="X-ray"/>
    <property type="resolution" value="2.40 A"/>
    <property type="chains" value="A/B=315-445"/>
</dbReference>
<dbReference type="PDBsum" id="6TQS"/>
<dbReference type="PDBsum" id="6TQT"/>
<dbReference type="PDBsum" id="6TQU"/>
<dbReference type="SMR" id="Q8NHP6"/>
<dbReference type="BioGRID" id="127702">
    <property type="interactions" value="111"/>
</dbReference>
<dbReference type="FunCoup" id="Q8NHP6">
    <property type="interactions" value="1700"/>
</dbReference>
<dbReference type="IntAct" id="Q8NHP6">
    <property type="interactions" value="157"/>
</dbReference>
<dbReference type="MINT" id="Q8NHP6"/>
<dbReference type="STRING" id="9606.ENSP00000369860"/>
<dbReference type="GlyGen" id="Q8NHP6">
    <property type="glycosylation" value="1 site, 1 O-linked glycan (1 site)"/>
</dbReference>
<dbReference type="iPTMnet" id="Q8NHP6"/>
<dbReference type="PhosphoSitePlus" id="Q8NHP6"/>
<dbReference type="SwissPalm" id="Q8NHP6"/>
<dbReference type="BioMuta" id="MOSPD2"/>
<dbReference type="DMDM" id="67461057"/>
<dbReference type="jPOST" id="Q8NHP6"/>
<dbReference type="MassIVE" id="Q8NHP6"/>
<dbReference type="PaxDb" id="9606-ENSP00000369860"/>
<dbReference type="PeptideAtlas" id="Q8NHP6"/>
<dbReference type="ProteomicsDB" id="73729">
    <molecule id="Q8NHP6-1"/>
</dbReference>
<dbReference type="ProteomicsDB" id="73730">
    <molecule id="Q8NHP6-2"/>
</dbReference>
<dbReference type="Pumba" id="Q8NHP6"/>
<dbReference type="Antibodypedia" id="516">
    <property type="antibodies" value="74 antibodies from 16 providers"/>
</dbReference>
<dbReference type="DNASU" id="158747"/>
<dbReference type="Ensembl" id="ENST00000380492.8">
    <molecule id="Q8NHP6-1"/>
    <property type="protein sequence ID" value="ENSP00000369860.3"/>
    <property type="gene ID" value="ENSG00000130150.12"/>
</dbReference>
<dbReference type="GeneID" id="158747"/>
<dbReference type="KEGG" id="hsa:158747"/>
<dbReference type="MANE-Select" id="ENST00000380492.8">
    <property type="protein sequence ID" value="ENSP00000369860.3"/>
    <property type="RefSeq nucleotide sequence ID" value="NM_152581.4"/>
    <property type="RefSeq protein sequence ID" value="NP_689794.1"/>
</dbReference>
<dbReference type="UCSC" id="uc004cwi.4">
    <molecule id="Q8NHP6-1"/>
    <property type="organism name" value="human"/>
</dbReference>
<dbReference type="AGR" id="HGNC:28381"/>
<dbReference type="CTD" id="158747"/>
<dbReference type="DisGeNET" id="158747"/>
<dbReference type="GeneCards" id="MOSPD2"/>
<dbReference type="HGNC" id="HGNC:28381">
    <property type="gene designation" value="MOSPD2"/>
</dbReference>
<dbReference type="HPA" id="ENSG00000130150">
    <property type="expression patterns" value="Low tissue specificity"/>
</dbReference>
<dbReference type="MIM" id="301086">
    <property type="type" value="gene"/>
</dbReference>
<dbReference type="neXtProt" id="NX_Q8NHP6"/>
<dbReference type="OpenTargets" id="ENSG00000130150"/>
<dbReference type="PharmGKB" id="PA134898878"/>
<dbReference type="VEuPathDB" id="HostDB:ENSG00000130150"/>
<dbReference type="eggNOG" id="KOG1470">
    <property type="taxonomic scope" value="Eukaryota"/>
</dbReference>
<dbReference type="GeneTree" id="ENSGT00390000016713"/>
<dbReference type="HOGENOM" id="CLU_028924_1_0_1"/>
<dbReference type="InParanoid" id="Q8NHP6"/>
<dbReference type="OMA" id="NDALKCW"/>
<dbReference type="OrthoDB" id="75724at2759"/>
<dbReference type="PAN-GO" id="Q8NHP6">
    <property type="GO annotations" value="2 GO annotations based on evolutionary models"/>
</dbReference>
<dbReference type="PhylomeDB" id="Q8NHP6"/>
<dbReference type="TreeFam" id="TF351054"/>
<dbReference type="PathwayCommons" id="Q8NHP6"/>
<dbReference type="Reactome" id="R-HSA-6798695">
    <property type="pathway name" value="Neutrophil degranulation"/>
</dbReference>
<dbReference type="Reactome" id="R-HSA-9013405">
    <property type="pathway name" value="RHOD GTPase cycle"/>
</dbReference>
<dbReference type="SignaLink" id="Q8NHP6"/>
<dbReference type="BioGRID-ORCS" id="158747">
    <property type="hits" value="15 hits in 779 CRISPR screens"/>
</dbReference>
<dbReference type="ChiTaRS" id="MOSPD2">
    <property type="organism name" value="human"/>
</dbReference>
<dbReference type="GenomeRNAi" id="158747"/>
<dbReference type="Pharos" id="Q8NHP6">
    <property type="development level" value="Tbio"/>
</dbReference>
<dbReference type="PRO" id="PR:Q8NHP6"/>
<dbReference type="Proteomes" id="UP000005640">
    <property type="component" value="Chromosome X"/>
</dbReference>
<dbReference type="RNAct" id="Q8NHP6">
    <property type="molecule type" value="protein"/>
</dbReference>
<dbReference type="Bgee" id="ENSG00000130150">
    <property type="expression patterns" value="Expressed in secondary oocyte and 183 other cell types or tissues"/>
</dbReference>
<dbReference type="ExpressionAtlas" id="Q8NHP6">
    <property type="expression patterns" value="baseline and differential"/>
</dbReference>
<dbReference type="GO" id="GO:0012505">
    <property type="term" value="C:endomembrane system"/>
    <property type="evidence" value="ECO:0000318"/>
    <property type="project" value="GO_Central"/>
</dbReference>
<dbReference type="GO" id="GO:0005783">
    <property type="term" value="C:endoplasmic reticulum"/>
    <property type="evidence" value="ECO:0000314"/>
    <property type="project" value="HPA"/>
</dbReference>
<dbReference type="GO" id="GO:0005789">
    <property type="term" value="C:endoplasmic reticulum membrane"/>
    <property type="evidence" value="ECO:0000314"/>
    <property type="project" value="UniProtKB"/>
</dbReference>
<dbReference type="GO" id="GO:0140284">
    <property type="term" value="C:endoplasmic reticulum-endosome membrane contact site"/>
    <property type="evidence" value="ECO:0000314"/>
    <property type="project" value="UniProtKB"/>
</dbReference>
<dbReference type="GO" id="GO:0016020">
    <property type="term" value="C:membrane"/>
    <property type="evidence" value="ECO:0007005"/>
    <property type="project" value="UniProtKB"/>
</dbReference>
<dbReference type="GO" id="GO:0044232">
    <property type="term" value="C:organelle membrane contact site"/>
    <property type="evidence" value="ECO:0000314"/>
    <property type="project" value="UniProtKB"/>
</dbReference>
<dbReference type="GO" id="GO:0005886">
    <property type="term" value="C:plasma membrane"/>
    <property type="evidence" value="ECO:0000314"/>
    <property type="project" value="UniProtKB"/>
</dbReference>
<dbReference type="GO" id="GO:0035579">
    <property type="term" value="C:specific granule membrane"/>
    <property type="evidence" value="ECO:0000304"/>
    <property type="project" value="Reactome"/>
</dbReference>
<dbReference type="GO" id="GO:0033149">
    <property type="term" value="F:FFAT motif binding"/>
    <property type="evidence" value="ECO:0000314"/>
    <property type="project" value="UniProtKB"/>
</dbReference>
<dbReference type="GO" id="GO:0006935">
    <property type="term" value="P:chemotaxis"/>
    <property type="evidence" value="ECO:0007669"/>
    <property type="project" value="UniProtKB-KW"/>
</dbReference>
<dbReference type="GO" id="GO:0140042">
    <property type="term" value="P:lipid droplet formation"/>
    <property type="evidence" value="ECO:0000314"/>
    <property type="project" value="UniProtKB"/>
</dbReference>
<dbReference type="GO" id="GO:0090026">
    <property type="term" value="P:positive regulation of monocyte chemotaxis"/>
    <property type="evidence" value="ECO:0000314"/>
    <property type="project" value="UniProtKB"/>
</dbReference>
<dbReference type="GO" id="GO:0090023">
    <property type="term" value="P:positive regulation of neutrophil chemotaxis"/>
    <property type="evidence" value="ECO:0000314"/>
    <property type="project" value="UniProtKB"/>
</dbReference>
<dbReference type="GO" id="GO:0051260">
    <property type="term" value="P:protein homooligomerization"/>
    <property type="evidence" value="ECO:0000314"/>
    <property type="project" value="UniProtKB"/>
</dbReference>
<dbReference type="CDD" id="cd00170">
    <property type="entry name" value="SEC14"/>
    <property type="match status" value="1"/>
</dbReference>
<dbReference type="FunFam" id="3.40.525.10:FF:000010">
    <property type="entry name" value="motile sperm domain-containing protein 2 isoform X1"/>
    <property type="match status" value="1"/>
</dbReference>
<dbReference type="FunFam" id="2.60.40.10:FF:000586">
    <property type="entry name" value="motile sperm domain-containing protein 2 isoform X2"/>
    <property type="match status" value="1"/>
</dbReference>
<dbReference type="Gene3D" id="3.40.525.10">
    <property type="entry name" value="CRAL-TRIO lipid binding domain"/>
    <property type="match status" value="1"/>
</dbReference>
<dbReference type="Gene3D" id="2.60.40.10">
    <property type="entry name" value="Immunoglobulins"/>
    <property type="match status" value="1"/>
</dbReference>
<dbReference type="InterPro" id="IPR001251">
    <property type="entry name" value="CRAL-TRIO_dom"/>
</dbReference>
<dbReference type="InterPro" id="IPR036865">
    <property type="entry name" value="CRAL-TRIO_dom_sf"/>
</dbReference>
<dbReference type="InterPro" id="IPR036273">
    <property type="entry name" value="CRAL/TRIO_N_dom_sf"/>
</dbReference>
<dbReference type="InterPro" id="IPR053012">
    <property type="entry name" value="ER-organelle_contact"/>
</dbReference>
<dbReference type="InterPro" id="IPR013783">
    <property type="entry name" value="Ig-like_fold"/>
</dbReference>
<dbReference type="InterPro" id="IPR000535">
    <property type="entry name" value="MSP_dom"/>
</dbReference>
<dbReference type="InterPro" id="IPR008962">
    <property type="entry name" value="PapD-like_sf"/>
</dbReference>
<dbReference type="PANTHER" id="PTHR46384">
    <property type="entry name" value="MOTILE SPERM DOMAIN-CONTAINING PROTEIN 2"/>
    <property type="match status" value="1"/>
</dbReference>
<dbReference type="PANTHER" id="PTHR46384:SF1">
    <property type="entry name" value="MOTILE SPERM DOMAIN-CONTAINING PROTEIN 2"/>
    <property type="match status" value="1"/>
</dbReference>
<dbReference type="Pfam" id="PF00650">
    <property type="entry name" value="CRAL_TRIO"/>
    <property type="match status" value="1"/>
</dbReference>
<dbReference type="Pfam" id="PF00635">
    <property type="entry name" value="Motile_Sperm"/>
    <property type="match status" value="1"/>
</dbReference>
<dbReference type="SMART" id="SM00516">
    <property type="entry name" value="SEC14"/>
    <property type="match status" value="1"/>
</dbReference>
<dbReference type="SUPFAM" id="SSF52087">
    <property type="entry name" value="CRAL/TRIO domain"/>
    <property type="match status" value="1"/>
</dbReference>
<dbReference type="SUPFAM" id="SSF46938">
    <property type="entry name" value="CRAL/TRIO N-terminal domain"/>
    <property type="match status" value="1"/>
</dbReference>
<dbReference type="SUPFAM" id="SSF49354">
    <property type="entry name" value="PapD-like"/>
    <property type="match status" value="1"/>
</dbReference>
<dbReference type="PROSITE" id="PS50191">
    <property type="entry name" value="CRAL_TRIO"/>
    <property type="match status" value="1"/>
</dbReference>
<dbReference type="PROSITE" id="PS50202">
    <property type="entry name" value="MSP"/>
    <property type="match status" value="1"/>
</dbReference>
<keyword id="KW-0002">3D-structure</keyword>
<keyword id="KW-0025">Alternative splicing</keyword>
<keyword id="KW-0145">Chemotaxis</keyword>
<keyword id="KW-0256">Endoplasmic reticulum</keyword>
<keyword id="KW-0472">Membrane</keyword>
<keyword id="KW-1267">Proteomics identification</keyword>
<keyword id="KW-1185">Reference proteome</keyword>
<keyword id="KW-0812">Transmembrane</keyword>
<keyword id="KW-1133">Transmembrane helix</keyword>